<keyword id="KW-0997">Cell inner membrane</keyword>
<keyword id="KW-1003">Cell membrane</keyword>
<keyword id="KW-0472">Membrane</keyword>
<keyword id="KW-0812">Transmembrane</keyword>
<keyword id="KW-1133">Transmembrane helix</keyword>
<organism>
    <name type="scientific">Salmonella heidelberg (strain SL476)</name>
    <dbReference type="NCBI Taxonomy" id="454169"/>
    <lineage>
        <taxon>Bacteria</taxon>
        <taxon>Pseudomonadati</taxon>
        <taxon>Pseudomonadota</taxon>
        <taxon>Gammaproteobacteria</taxon>
        <taxon>Enterobacterales</taxon>
        <taxon>Enterobacteriaceae</taxon>
        <taxon>Salmonella</taxon>
    </lineage>
</organism>
<protein>
    <recommendedName>
        <fullName evidence="1">UPF0761 membrane protein YihY</fullName>
    </recommendedName>
</protein>
<gene>
    <name evidence="1" type="primary">yihY</name>
    <name type="ordered locus">SeHA_C4351</name>
</gene>
<name>YIHY_SALHS</name>
<sequence length="290" mass="32645">MLKTVHQKAGRHTRPVRAWLKLLWQRIDEDNMTTLAGNLAYVSLLSLVPLIAVVFALFAAFPMFSDVSIQLRHFIFANFMPATGDVIQRYIEQFVANSNKMTAVGACGLIVTALLLMYAIDSALNTIWRSKRTRPKVYSFAVYWMILTLGPLLAGASLAISSYLLSLRWASDLNTVIDNVLRILPLLLSWISFWLLYSIVPTTRVPNRDALVGAFVAALLFEAGKKGFALYITMFPSYQLIYGVLAVIPILFVWVYWTWCIVLLGAEITVTLGEYRKLKQAAEQEEADQP</sequence>
<proteinExistence type="inferred from homology"/>
<dbReference type="EMBL" id="CP001120">
    <property type="protein sequence ID" value="ACF69265.1"/>
    <property type="molecule type" value="Genomic_DNA"/>
</dbReference>
<dbReference type="RefSeq" id="WP_000921423.1">
    <property type="nucleotide sequence ID" value="NC_011083.1"/>
</dbReference>
<dbReference type="KEGG" id="seh:SeHA_C4351"/>
<dbReference type="HOGENOM" id="CLU_032288_0_0_6"/>
<dbReference type="Proteomes" id="UP000001866">
    <property type="component" value="Chromosome"/>
</dbReference>
<dbReference type="GO" id="GO:0005886">
    <property type="term" value="C:plasma membrane"/>
    <property type="evidence" value="ECO:0007669"/>
    <property type="project" value="UniProtKB-SubCell"/>
</dbReference>
<dbReference type="HAMAP" id="MF_00672">
    <property type="entry name" value="UPF0761"/>
    <property type="match status" value="1"/>
</dbReference>
<dbReference type="InterPro" id="IPR023679">
    <property type="entry name" value="UPF0761_bac"/>
</dbReference>
<dbReference type="InterPro" id="IPR017039">
    <property type="entry name" value="Virul_fac_BrkB"/>
</dbReference>
<dbReference type="NCBIfam" id="NF002457">
    <property type="entry name" value="PRK01637.1"/>
    <property type="match status" value="1"/>
</dbReference>
<dbReference type="NCBIfam" id="TIGR00765">
    <property type="entry name" value="yihY_not_rbn"/>
    <property type="match status" value="1"/>
</dbReference>
<dbReference type="PANTHER" id="PTHR30213">
    <property type="entry name" value="INNER MEMBRANE PROTEIN YHJD"/>
    <property type="match status" value="1"/>
</dbReference>
<dbReference type="PANTHER" id="PTHR30213:SF0">
    <property type="entry name" value="UPF0761 MEMBRANE PROTEIN YIHY"/>
    <property type="match status" value="1"/>
</dbReference>
<dbReference type="Pfam" id="PF03631">
    <property type="entry name" value="Virul_fac_BrkB"/>
    <property type="match status" value="1"/>
</dbReference>
<dbReference type="PIRSF" id="PIRSF035875">
    <property type="entry name" value="RNase_BN"/>
    <property type="match status" value="1"/>
</dbReference>
<reference key="1">
    <citation type="journal article" date="2011" name="J. Bacteriol.">
        <title>Comparative genomics of 28 Salmonella enterica isolates: evidence for CRISPR-mediated adaptive sublineage evolution.</title>
        <authorList>
            <person name="Fricke W.F."/>
            <person name="Mammel M.K."/>
            <person name="McDermott P.F."/>
            <person name="Tartera C."/>
            <person name="White D.G."/>
            <person name="Leclerc J.E."/>
            <person name="Ravel J."/>
            <person name="Cebula T.A."/>
        </authorList>
    </citation>
    <scope>NUCLEOTIDE SEQUENCE [LARGE SCALE GENOMIC DNA]</scope>
    <source>
        <strain>SL476</strain>
    </source>
</reference>
<accession>B4TBV9</accession>
<comment type="subcellular location">
    <subcellularLocation>
        <location evidence="1">Cell inner membrane</location>
        <topology evidence="1">Multi-pass membrane protein</topology>
    </subcellularLocation>
</comment>
<comment type="similarity">
    <text evidence="1">Belongs to the UPF0761 family.</text>
</comment>
<evidence type="ECO:0000255" key="1">
    <source>
        <dbReference type="HAMAP-Rule" id="MF_00672"/>
    </source>
</evidence>
<feature type="chain" id="PRO_1000131563" description="UPF0761 membrane protein YihY">
    <location>
        <begin position="1"/>
        <end position="290"/>
    </location>
</feature>
<feature type="transmembrane region" description="Helical" evidence="1">
    <location>
        <begin position="44"/>
        <end position="64"/>
    </location>
</feature>
<feature type="transmembrane region" description="Helical" evidence="1">
    <location>
        <begin position="104"/>
        <end position="124"/>
    </location>
</feature>
<feature type="transmembrane region" description="Helical" evidence="1">
    <location>
        <begin position="140"/>
        <end position="160"/>
    </location>
</feature>
<feature type="transmembrane region" description="Helical" evidence="1">
    <location>
        <begin position="183"/>
        <end position="203"/>
    </location>
</feature>
<feature type="transmembrane region" description="Helical" evidence="1">
    <location>
        <begin position="210"/>
        <end position="230"/>
    </location>
</feature>
<feature type="transmembrane region" description="Helical" evidence="1">
    <location>
        <begin position="244"/>
        <end position="264"/>
    </location>
</feature>